<feature type="chain" id="PRO_0000346940" description="Uncharacterized protein DDB_G0289767">
    <location>
        <begin position="1"/>
        <end position="63"/>
    </location>
</feature>
<reference key="1">
    <citation type="journal article" date="2005" name="Nature">
        <title>The genome of the social amoeba Dictyostelium discoideum.</title>
        <authorList>
            <person name="Eichinger L."/>
            <person name="Pachebat J.A."/>
            <person name="Gloeckner G."/>
            <person name="Rajandream M.A."/>
            <person name="Sucgang R."/>
            <person name="Berriman M."/>
            <person name="Song J."/>
            <person name="Olsen R."/>
            <person name="Szafranski K."/>
            <person name="Xu Q."/>
            <person name="Tunggal B."/>
            <person name="Kummerfeld S."/>
            <person name="Madera M."/>
            <person name="Konfortov B.A."/>
            <person name="Rivero F."/>
            <person name="Bankier A.T."/>
            <person name="Lehmann R."/>
            <person name="Hamlin N."/>
            <person name="Davies R."/>
            <person name="Gaudet P."/>
            <person name="Fey P."/>
            <person name="Pilcher K."/>
            <person name="Chen G."/>
            <person name="Saunders D."/>
            <person name="Sodergren E.J."/>
            <person name="Davis P."/>
            <person name="Kerhornou A."/>
            <person name="Nie X."/>
            <person name="Hall N."/>
            <person name="Anjard C."/>
            <person name="Hemphill L."/>
            <person name="Bason N."/>
            <person name="Farbrother P."/>
            <person name="Desany B."/>
            <person name="Just E."/>
            <person name="Morio T."/>
            <person name="Rost R."/>
            <person name="Churcher C.M."/>
            <person name="Cooper J."/>
            <person name="Haydock S."/>
            <person name="van Driessche N."/>
            <person name="Cronin A."/>
            <person name="Goodhead I."/>
            <person name="Muzny D.M."/>
            <person name="Mourier T."/>
            <person name="Pain A."/>
            <person name="Lu M."/>
            <person name="Harper D."/>
            <person name="Lindsay R."/>
            <person name="Hauser H."/>
            <person name="James K.D."/>
            <person name="Quiles M."/>
            <person name="Madan Babu M."/>
            <person name="Saito T."/>
            <person name="Buchrieser C."/>
            <person name="Wardroper A."/>
            <person name="Felder M."/>
            <person name="Thangavelu M."/>
            <person name="Johnson D."/>
            <person name="Knights A."/>
            <person name="Loulseged H."/>
            <person name="Mungall K.L."/>
            <person name="Oliver K."/>
            <person name="Price C."/>
            <person name="Quail M.A."/>
            <person name="Urushihara H."/>
            <person name="Hernandez J."/>
            <person name="Rabbinowitsch E."/>
            <person name="Steffen D."/>
            <person name="Sanders M."/>
            <person name="Ma J."/>
            <person name="Kohara Y."/>
            <person name="Sharp S."/>
            <person name="Simmonds M.N."/>
            <person name="Spiegler S."/>
            <person name="Tivey A."/>
            <person name="Sugano S."/>
            <person name="White B."/>
            <person name="Walker D."/>
            <person name="Woodward J.R."/>
            <person name="Winckler T."/>
            <person name="Tanaka Y."/>
            <person name="Shaulsky G."/>
            <person name="Schleicher M."/>
            <person name="Weinstock G.M."/>
            <person name="Rosenthal A."/>
            <person name="Cox E.C."/>
            <person name="Chisholm R.L."/>
            <person name="Gibbs R.A."/>
            <person name="Loomis W.F."/>
            <person name="Platzer M."/>
            <person name="Kay R.R."/>
            <person name="Williams J.G."/>
            <person name="Dear P.H."/>
            <person name="Noegel A.A."/>
            <person name="Barrell B.G."/>
            <person name="Kuspa A."/>
        </authorList>
    </citation>
    <scope>NUCLEOTIDE SEQUENCE [LARGE SCALE GENOMIC DNA]</scope>
    <source>
        <strain>AX4</strain>
    </source>
</reference>
<protein>
    <recommendedName>
        <fullName>Uncharacterized protein DDB_G0289767</fullName>
    </recommendedName>
</protein>
<proteinExistence type="predicted"/>
<dbReference type="EMBL" id="AAFI02000148">
    <property type="protein sequence ID" value="EAL62595.1"/>
    <property type="molecule type" value="Genomic_DNA"/>
</dbReference>
<dbReference type="RefSeq" id="XP_636108.1">
    <property type="nucleotide sequence ID" value="XM_631016.1"/>
</dbReference>
<dbReference type="PaxDb" id="44689-DDB0188571"/>
<dbReference type="EnsemblProtists" id="EAL62595">
    <property type="protein sequence ID" value="EAL62595"/>
    <property type="gene ID" value="DDB_G0289767"/>
</dbReference>
<dbReference type="GeneID" id="8627321"/>
<dbReference type="KEGG" id="ddi:DDB_G0289767"/>
<dbReference type="dictyBase" id="DDB_G0289767"/>
<dbReference type="VEuPathDB" id="AmoebaDB:DDB_G0289767"/>
<dbReference type="HOGENOM" id="CLU_2890477_0_0_1"/>
<dbReference type="InParanoid" id="Q54H10"/>
<dbReference type="PRO" id="PR:Q54H10"/>
<dbReference type="Proteomes" id="UP000002195">
    <property type="component" value="Chromosome 5"/>
</dbReference>
<gene>
    <name type="ORF">DDB_G0289767</name>
</gene>
<name>Y8571_DICDI</name>
<organism>
    <name type="scientific">Dictyostelium discoideum</name>
    <name type="common">Social amoeba</name>
    <dbReference type="NCBI Taxonomy" id="44689"/>
    <lineage>
        <taxon>Eukaryota</taxon>
        <taxon>Amoebozoa</taxon>
        <taxon>Evosea</taxon>
        <taxon>Eumycetozoa</taxon>
        <taxon>Dictyostelia</taxon>
        <taxon>Dictyosteliales</taxon>
        <taxon>Dictyosteliaceae</taxon>
        <taxon>Dictyostelium</taxon>
    </lineage>
</organism>
<keyword id="KW-1185">Reference proteome</keyword>
<accession>Q54H10</accession>
<sequence>MIVDNLKNLILSKNSNQGVTPNASIGFRSNKYGSNIVCESDSIQIKATPTITFTYTKPGYNKT</sequence>